<reference key="1">
    <citation type="journal article" date="2002" name="DNA Res.">
        <title>Complete genome structure of the thermophilic cyanobacterium Thermosynechococcus elongatus BP-1.</title>
        <authorList>
            <person name="Nakamura Y."/>
            <person name="Kaneko T."/>
            <person name="Sato S."/>
            <person name="Ikeuchi M."/>
            <person name="Katoh H."/>
            <person name="Sasamoto S."/>
            <person name="Watanabe A."/>
            <person name="Iriguchi M."/>
            <person name="Kawashima K."/>
            <person name="Kimura T."/>
            <person name="Kishida Y."/>
            <person name="Kiyokawa C."/>
            <person name="Kohara M."/>
            <person name="Matsumoto M."/>
            <person name="Matsuno A."/>
            <person name="Nakazaki N."/>
            <person name="Shimpo S."/>
            <person name="Sugimoto M."/>
            <person name="Takeuchi C."/>
            <person name="Yamada M."/>
            <person name="Tabata S."/>
        </authorList>
    </citation>
    <scope>NUCLEOTIDE SEQUENCE [LARGE SCALE GENOMIC DNA]</scope>
    <source>
        <strain>NIES-2133 / IAM M-273 / BP-1</strain>
    </source>
</reference>
<gene>
    <name evidence="1" type="primary">purM</name>
    <name type="ordered locus">tlr1811</name>
</gene>
<comment type="catalytic activity">
    <reaction evidence="1">
        <text>2-formamido-N(1)-(5-O-phospho-beta-D-ribosyl)acetamidine + ATP = 5-amino-1-(5-phospho-beta-D-ribosyl)imidazole + ADP + phosphate + H(+)</text>
        <dbReference type="Rhea" id="RHEA:23032"/>
        <dbReference type="ChEBI" id="CHEBI:15378"/>
        <dbReference type="ChEBI" id="CHEBI:30616"/>
        <dbReference type="ChEBI" id="CHEBI:43474"/>
        <dbReference type="ChEBI" id="CHEBI:137981"/>
        <dbReference type="ChEBI" id="CHEBI:147287"/>
        <dbReference type="ChEBI" id="CHEBI:456216"/>
        <dbReference type="EC" id="6.3.3.1"/>
    </reaction>
</comment>
<comment type="pathway">
    <text evidence="1">Purine metabolism; IMP biosynthesis via de novo pathway; 5-amino-1-(5-phospho-D-ribosyl)imidazole from N(2)-formyl-N(1)-(5-phospho-D-ribosyl)glycinamide: step 2/2.</text>
</comment>
<comment type="subcellular location">
    <subcellularLocation>
        <location evidence="1">Cytoplasm</location>
    </subcellularLocation>
</comment>
<comment type="similarity">
    <text evidence="1">Belongs to the AIR synthase family.</text>
</comment>
<name>PUR5_THEVB</name>
<accession>Q8DHY2</accession>
<evidence type="ECO:0000255" key="1">
    <source>
        <dbReference type="HAMAP-Rule" id="MF_00741"/>
    </source>
</evidence>
<protein>
    <recommendedName>
        <fullName evidence="1">Phosphoribosylformylglycinamidine cyclo-ligase</fullName>
        <ecNumber evidence="1">6.3.3.1</ecNumber>
    </recommendedName>
    <alternativeName>
        <fullName evidence="1">AIR synthase</fullName>
    </alternativeName>
    <alternativeName>
        <fullName evidence="1">AIRS</fullName>
    </alternativeName>
    <alternativeName>
        <fullName evidence="1">Phosphoribosyl-aminoimidazole synthetase</fullName>
    </alternativeName>
</protein>
<keyword id="KW-0067">ATP-binding</keyword>
<keyword id="KW-0963">Cytoplasm</keyword>
<keyword id="KW-0436">Ligase</keyword>
<keyword id="KW-0547">Nucleotide-binding</keyword>
<keyword id="KW-0658">Purine biosynthesis</keyword>
<keyword id="KW-1185">Reference proteome</keyword>
<sequence>MDYRSAGVDVAAGRAFVEQIRPLVQRTQRPEVVGGLGGFAGLCQIPKGYRQPLLVSGTDGVGTKLKLAQALDRHNTVGIDLVAMCVNDVLTCGAEPLFFLDYIACGRLAPEMMNAVVAGIAQGCEAAGCALLGGETAEMPGFYAEGVYDLAGFCVGVVEQDQVLDGTQVQVGDVVLGLASSGLHSNGFSLVRKIVSDRQLSWQDTPLGPTSLGELCLEPTRIYVQPIRAALSQGIPIHGMAHITGGGLPENLPRCLGQGRSAHLDPQAWPIPPLFHWLGEVGNVSLGELFNTFNMGIGYTVVLPASAVAAAQTCFAKWGIESWPIGTVVAGAGEVLGLPAA</sequence>
<feature type="chain" id="PRO_0000148266" description="Phosphoribosylformylglycinamidine cyclo-ligase">
    <location>
        <begin position="1"/>
        <end position="341"/>
    </location>
</feature>
<organism>
    <name type="scientific">Thermosynechococcus vestitus (strain NIES-2133 / IAM M-273 / BP-1)</name>
    <dbReference type="NCBI Taxonomy" id="197221"/>
    <lineage>
        <taxon>Bacteria</taxon>
        <taxon>Bacillati</taxon>
        <taxon>Cyanobacteriota</taxon>
        <taxon>Cyanophyceae</taxon>
        <taxon>Acaryochloridales</taxon>
        <taxon>Thermosynechococcaceae</taxon>
        <taxon>Thermosynechococcus</taxon>
    </lineage>
</organism>
<dbReference type="EC" id="6.3.3.1" evidence="1"/>
<dbReference type="EMBL" id="BA000039">
    <property type="protein sequence ID" value="BAC09363.1"/>
    <property type="molecule type" value="Genomic_DNA"/>
</dbReference>
<dbReference type="RefSeq" id="NP_682601.1">
    <property type="nucleotide sequence ID" value="NC_004113.1"/>
</dbReference>
<dbReference type="RefSeq" id="WP_011057648.1">
    <property type="nucleotide sequence ID" value="NC_004113.1"/>
</dbReference>
<dbReference type="SMR" id="Q8DHY2"/>
<dbReference type="STRING" id="197221.gene:10748416"/>
<dbReference type="EnsemblBacteria" id="BAC09363">
    <property type="protein sequence ID" value="BAC09363"/>
    <property type="gene ID" value="BAC09363"/>
</dbReference>
<dbReference type="KEGG" id="tel:tlr1811"/>
<dbReference type="PATRIC" id="fig|197221.4.peg.1893"/>
<dbReference type="eggNOG" id="COG0150">
    <property type="taxonomic scope" value="Bacteria"/>
</dbReference>
<dbReference type="UniPathway" id="UPA00074">
    <property type="reaction ID" value="UER00129"/>
</dbReference>
<dbReference type="Proteomes" id="UP000000440">
    <property type="component" value="Chromosome"/>
</dbReference>
<dbReference type="GO" id="GO:0005829">
    <property type="term" value="C:cytosol"/>
    <property type="evidence" value="ECO:0007669"/>
    <property type="project" value="TreeGrafter"/>
</dbReference>
<dbReference type="GO" id="GO:0005524">
    <property type="term" value="F:ATP binding"/>
    <property type="evidence" value="ECO:0007669"/>
    <property type="project" value="UniProtKB-KW"/>
</dbReference>
<dbReference type="GO" id="GO:0004637">
    <property type="term" value="F:phosphoribosylamine-glycine ligase activity"/>
    <property type="evidence" value="ECO:0007669"/>
    <property type="project" value="TreeGrafter"/>
</dbReference>
<dbReference type="GO" id="GO:0004641">
    <property type="term" value="F:phosphoribosylformylglycinamidine cyclo-ligase activity"/>
    <property type="evidence" value="ECO:0007669"/>
    <property type="project" value="UniProtKB-UniRule"/>
</dbReference>
<dbReference type="GO" id="GO:0006189">
    <property type="term" value="P:'de novo' IMP biosynthetic process"/>
    <property type="evidence" value="ECO:0007669"/>
    <property type="project" value="UniProtKB-UniRule"/>
</dbReference>
<dbReference type="GO" id="GO:0046084">
    <property type="term" value="P:adenine biosynthetic process"/>
    <property type="evidence" value="ECO:0007669"/>
    <property type="project" value="TreeGrafter"/>
</dbReference>
<dbReference type="CDD" id="cd02196">
    <property type="entry name" value="PurM"/>
    <property type="match status" value="1"/>
</dbReference>
<dbReference type="FunFam" id="3.30.1330.10:FF:000001">
    <property type="entry name" value="Phosphoribosylformylglycinamidine cyclo-ligase"/>
    <property type="match status" value="1"/>
</dbReference>
<dbReference type="FunFam" id="3.90.650.10:FF:000011">
    <property type="entry name" value="Phosphoribosylformylglycinamidine cyclo-ligase"/>
    <property type="match status" value="1"/>
</dbReference>
<dbReference type="Gene3D" id="3.90.650.10">
    <property type="entry name" value="PurM-like C-terminal domain"/>
    <property type="match status" value="1"/>
</dbReference>
<dbReference type="Gene3D" id="3.30.1330.10">
    <property type="entry name" value="PurM-like, N-terminal domain"/>
    <property type="match status" value="1"/>
</dbReference>
<dbReference type="HAMAP" id="MF_00741">
    <property type="entry name" value="AIRS"/>
    <property type="match status" value="1"/>
</dbReference>
<dbReference type="InterPro" id="IPR010918">
    <property type="entry name" value="PurM-like_C_dom"/>
</dbReference>
<dbReference type="InterPro" id="IPR036676">
    <property type="entry name" value="PurM-like_C_sf"/>
</dbReference>
<dbReference type="InterPro" id="IPR016188">
    <property type="entry name" value="PurM-like_N"/>
</dbReference>
<dbReference type="InterPro" id="IPR036921">
    <property type="entry name" value="PurM-like_N_sf"/>
</dbReference>
<dbReference type="InterPro" id="IPR004733">
    <property type="entry name" value="PurM_cligase"/>
</dbReference>
<dbReference type="NCBIfam" id="TIGR00878">
    <property type="entry name" value="purM"/>
    <property type="match status" value="1"/>
</dbReference>
<dbReference type="PANTHER" id="PTHR10520:SF12">
    <property type="entry name" value="TRIFUNCTIONAL PURINE BIOSYNTHETIC PROTEIN ADENOSINE-3"/>
    <property type="match status" value="1"/>
</dbReference>
<dbReference type="PANTHER" id="PTHR10520">
    <property type="entry name" value="TRIFUNCTIONAL PURINE BIOSYNTHETIC PROTEIN ADENOSINE-3-RELATED"/>
    <property type="match status" value="1"/>
</dbReference>
<dbReference type="Pfam" id="PF00586">
    <property type="entry name" value="AIRS"/>
    <property type="match status" value="1"/>
</dbReference>
<dbReference type="Pfam" id="PF02769">
    <property type="entry name" value="AIRS_C"/>
    <property type="match status" value="1"/>
</dbReference>
<dbReference type="SUPFAM" id="SSF56042">
    <property type="entry name" value="PurM C-terminal domain-like"/>
    <property type="match status" value="1"/>
</dbReference>
<dbReference type="SUPFAM" id="SSF55326">
    <property type="entry name" value="PurM N-terminal domain-like"/>
    <property type="match status" value="1"/>
</dbReference>
<proteinExistence type="inferred from homology"/>